<keyword id="KW-0227">DNA damage</keyword>
<keyword id="KW-0234">DNA repair</keyword>
<keyword id="KW-0235">DNA replication</keyword>
<keyword id="KW-0436">Ligase</keyword>
<keyword id="KW-0460">Magnesium</keyword>
<keyword id="KW-0464">Manganese</keyword>
<keyword id="KW-0479">Metal-binding</keyword>
<keyword id="KW-0520">NAD</keyword>
<keyword id="KW-0862">Zinc</keyword>
<accession>Q3KMM3</accession>
<protein>
    <recommendedName>
        <fullName evidence="1">DNA ligase</fullName>
        <ecNumber evidence="1">6.5.1.2</ecNumber>
    </recommendedName>
    <alternativeName>
        <fullName evidence="1">Polydeoxyribonucleotide synthase [NAD(+)]</fullName>
    </alternativeName>
</protein>
<gene>
    <name evidence="1" type="primary">ligA</name>
    <name type="ordered locus">CTA_0155</name>
</gene>
<dbReference type="EC" id="6.5.1.2" evidence="1"/>
<dbReference type="EMBL" id="CP000051">
    <property type="protein sequence ID" value="AAX50399.1"/>
    <property type="molecule type" value="Genomic_DNA"/>
</dbReference>
<dbReference type="RefSeq" id="WP_011324594.1">
    <property type="nucleotide sequence ID" value="NC_007429.1"/>
</dbReference>
<dbReference type="SMR" id="Q3KMM3"/>
<dbReference type="KEGG" id="cta:CTA_0155"/>
<dbReference type="HOGENOM" id="CLU_007764_2_1_0"/>
<dbReference type="Proteomes" id="UP000002532">
    <property type="component" value="Chromosome"/>
</dbReference>
<dbReference type="GO" id="GO:0005829">
    <property type="term" value="C:cytosol"/>
    <property type="evidence" value="ECO:0007669"/>
    <property type="project" value="TreeGrafter"/>
</dbReference>
<dbReference type="GO" id="GO:0003677">
    <property type="term" value="F:DNA binding"/>
    <property type="evidence" value="ECO:0007669"/>
    <property type="project" value="InterPro"/>
</dbReference>
<dbReference type="GO" id="GO:0003911">
    <property type="term" value="F:DNA ligase (NAD+) activity"/>
    <property type="evidence" value="ECO:0007669"/>
    <property type="project" value="UniProtKB-UniRule"/>
</dbReference>
<dbReference type="GO" id="GO:0046872">
    <property type="term" value="F:metal ion binding"/>
    <property type="evidence" value="ECO:0007669"/>
    <property type="project" value="UniProtKB-KW"/>
</dbReference>
<dbReference type="GO" id="GO:0006281">
    <property type="term" value="P:DNA repair"/>
    <property type="evidence" value="ECO:0007669"/>
    <property type="project" value="UniProtKB-KW"/>
</dbReference>
<dbReference type="GO" id="GO:0006260">
    <property type="term" value="P:DNA replication"/>
    <property type="evidence" value="ECO:0007669"/>
    <property type="project" value="UniProtKB-KW"/>
</dbReference>
<dbReference type="CDD" id="cd17748">
    <property type="entry name" value="BRCT_DNA_ligase_like"/>
    <property type="match status" value="1"/>
</dbReference>
<dbReference type="CDD" id="cd00114">
    <property type="entry name" value="LIGANc"/>
    <property type="match status" value="1"/>
</dbReference>
<dbReference type="FunFam" id="1.10.150.20:FF:000006">
    <property type="entry name" value="DNA ligase"/>
    <property type="match status" value="1"/>
</dbReference>
<dbReference type="FunFam" id="1.10.287.610:FF:000012">
    <property type="entry name" value="DNA ligase"/>
    <property type="match status" value="1"/>
</dbReference>
<dbReference type="FunFam" id="2.40.50.140:FF:000012">
    <property type="entry name" value="DNA ligase"/>
    <property type="match status" value="1"/>
</dbReference>
<dbReference type="FunFam" id="3.30.470.30:FF:000041">
    <property type="entry name" value="DNA ligase"/>
    <property type="match status" value="1"/>
</dbReference>
<dbReference type="Gene3D" id="6.20.10.30">
    <property type="match status" value="1"/>
</dbReference>
<dbReference type="Gene3D" id="1.10.150.20">
    <property type="entry name" value="5' to 3' exonuclease, C-terminal subdomain"/>
    <property type="match status" value="2"/>
</dbReference>
<dbReference type="Gene3D" id="3.40.50.10190">
    <property type="entry name" value="BRCT domain"/>
    <property type="match status" value="1"/>
</dbReference>
<dbReference type="Gene3D" id="3.30.470.30">
    <property type="entry name" value="DNA ligase/mRNA capping enzyme"/>
    <property type="match status" value="1"/>
</dbReference>
<dbReference type="Gene3D" id="1.10.287.610">
    <property type="entry name" value="Helix hairpin bin"/>
    <property type="match status" value="1"/>
</dbReference>
<dbReference type="Gene3D" id="2.40.50.140">
    <property type="entry name" value="Nucleic acid-binding proteins"/>
    <property type="match status" value="1"/>
</dbReference>
<dbReference type="HAMAP" id="MF_01588">
    <property type="entry name" value="DNA_ligase_A"/>
    <property type="match status" value="1"/>
</dbReference>
<dbReference type="InterPro" id="IPR001357">
    <property type="entry name" value="BRCT_dom"/>
</dbReference>
<dbReference type="InterPro" id="IPR036420">
    <property type="entry name" value="BRCT_dom_sf"/>
</dbReference>
<dbReference type="InterPro" id="IPR041663">
    <property type="entry name" value="DisA/LigA_HHH"/>
</dbReference>
<dbReference type="InterPro" id="IPR001679">
    <property type="entry name" value="DNA_ligase"/>
</dbReference>
<dbReference type="InterPro" id="IPR018239">
    <property type="entry name" value="DNA_ligase_AS"/>
</dbReference>
<dbReference type="InterPro" id="IPR033136">
    <property type="entry name" value="DNA_ligase_CS"/>
</dbReference>
<dbReference type="InterPro" id="IPR013839">
    <property type="entry name" value="DNAligase_adenylation"/>
</dbReference>
<dbReference type="InterPro" id="IPR013840">
    <property type="entry name" value="DNAligase_N"/>
</dbReference>
<dbReference type="InterPro" id="IPR003583">
    <property type="entry name" value="Hlx-hairpin-Hlx_DNA-bd_motif"/>
</dbReference>
<dbReference type="InterPro" id="IPR012340">
    <property type="entry name" value="NA-bd_OB-fold"/>
</dbReference>
<dbReference type="InterPro" id="IPR004150">
    <property type="entry name" value="NAD_DNA_ligase_OB"/>
</dbReference>
<dbReference type="InterPro" id="IPR010994">
    <property type="entry name" value="RuvA_2-like"/>
</dbReference>
<dbReference type="NCBIfam" id="TIGR00575">
    <property type="entry name" value="dnlj"/>
    <property type="match status" value="1"/>
</dbReference>
<dbReference type="NCBIfam" id="NF005932">
    <property type="entry name" value="PRK07956.1"/>
    <property type="match status" value="1"/>
</dbReference>
<dbReference type="PANTHER" id="PTHR23389">
    <property type="entry name" value="CHROMOSOME TRANSMISSION FIDELITY FACTOR 18"/>
    <property type="match status" value="1"/>
</dbReference>
<dbReference type="PANTHER" id="PTHR23389:SF9">
    <property type="entry name" value="DNA LIGASE"/>
    <property type="match status" value="1"/>
</dbReference>
<dbReference type="Pfam" id="PF00533">
    <property type="entry name" value="BRCT"/>
    <property type="match status" value="1"/>
</dbReference>
<dbReference type="Pfam" id="PF01653">
    <property type="entry name" value="DNA_ligase_aden"/>
    <property type="match status" value="1"/>
</dbReference>
<dbReference type="Pfam" id="PF03120">
    <property type="entry name" value="DNA_ligase_OB"/>
    <property type="match status" value="1"/>
</dbReference>
<dbReference type="Pfam" id="PF12826">
    <property type="entry name" value="HHH_2"/>
    <property type="match status" value="1"/>
</dbReference>
<dbReference type="Pfam" id="PF14520">
    <property type="entry name" value="HHH_5"/>
    <property type="match status" value="1"/>
</dbReference>
<dbReference type="PIRSF" id="PIRSF001604">
    <property type="entry name" value="LigA"/>
    <property type="match status" value="1"/>
</dbReference>
<dbReference type="SMART" id="SM00292">
    <property type="entry name" value="BRCT"/>
    <property type="match status" value="1"/>
</dbReference>
<dbReference type="SMART" id="SM00278">
    <property type="entry name" value="HhH1"/>
    <property type="match status" value="3"/>
</dbReference>
<dbReference type="SMART" id="SM00532">
    <property type="entry name" value="LIGANc"/>
    <property type="match status" value="1"/>
</dbReference>
<dbReference type="SUPFAM" id="SSF52113">
    <property type="entry name" value="BRCT domain"/>
    <property type="match status" value="1"/>
</dbReference>
<dbReference type="SUPFAM" id="SSF56091">
    <property type="entry name" value="DNA ligase/mRNA capping enzyme, catalytic domain"/>
    <property type="match status" value="1"/>
</dbReference>
<dbReference type="SUPFAM" id="SSF50249">
    <property type="entry name" value="Nucleic acid-binding proteins"/>
    <property type="match status" value="1"/>
</dbReference>
<dbReference type="SUPFAM" id="SSF47781">
    <property type="entry name" value="RuvA domain 2-like"/>
    <property type="match status" value="1"/>
</dbReference>
<dbReference type="PROSITE" id="PS50172">
    <property type="entry name" value="BRCT"/>
    <property type="match status" value="1"/>
</dbReference>
<dbReference type="PROSITE" id="PS01055">
    <property type="entry name" value="DNA_LIGASE_N1"/>
    <property type="match status" value="1"/>
</dbReference>
<dbReference type="PROSITE" id="PS01056">
    <property type="entry name" value="DNA_LIGASE_N2"/>
    <property type="match status" value="1"/>
</dbReference>
<sequence>MGAVSRDDYIALCTELVEHDRCYYVLNQPTISDYSYDVKMRELQEIEVQHPEWKVSWSPTMYLGDRPSGQFPVVPHSSPMLSIANVYSLQELEEFFSRTEKLLGYSPGYSLELKIDGIAVAIRYEKRLFAQALSRGNGVKGEDITANVSTIRSLPMRLPQEAPEDLEVRGEVFLSYEAFEELNACQREQGKLEFANPRNAAGGTLKLLSSKEAAKRKLDLSVYGLITDQKKRSHFENLQLCSQWGFFVAGMPKQCRSRQEVVERIREIEEMRAALPMAIDGVVIKVDNIAHQDRLGLTSKHYRWAIAYKYAPERAETILEDIVVQVGKTGILTPVAELAPVFLSGSRVSRASLYNQDEIEKKDIRIGDSVYVEKGGEVIPKIVGINLAKRSLESEPWKMPSLCPVCHEPVVKEKVSVRCINPLCSGGMLEKICFFASKSALNIDHLGEKVVTKLFEVGLISSCSDIFALTEEDLKQVPGFKDRSIQNLLASIAGAKKVALDRLLTALSIPFVGSSGAIALADHFVTLDKVIEASLDELMSIEGIGPKVAASIVAFFSKHENREEIRRMQELGVQVLSKQSDKEAPLQGKVFVLTGTLQQMTRTQAEERIRSLGGKVSSSVSKSTYAVIAGSEAGGKLKKAQDLGLSIWNESELLRILDAKSVS</sequence>
<comment type="function">
    <text evidence="1">DNA ligase that catalyzes the formation of phosphodiester linkages between 5'-phosphoryl and 3'-hydroxyl groups in double-stranded DNA using NAD as a coenzyme and as the energy source for the reaction. It is essential for DNA replication and repair of damaged DNA.</text>
</comment>
<comment type="catalytic activity">
    <reaction evidence="1">
        <text>NAD(+) + (deoxyribonucleotide)n-3'-hydroxyl + 5'-phospho-(deoxyribonucleotide)m = (deoxyribonucleotide)n+m + AMP + beta-nicotinamide D-nucleotide.</text>
        <dbReference type="EC" id="6.5.1.2"/>
    </reaction>
</comment>
<comment type="cofactor">
    <cofactor evidence="1">
        <name>Mg(2+)</name>
        <dbReference type="ChEBI" id="CHEBI:18420"/>
    </cofactor>
    <cofactor evidence="1">
        <name>Mn(2+)</name>
        <dbReference type="ChEBI" id="CHEBI:29035"/>
    </cofactor>
</comment>
<comment type="similarity">
    <text evidence="1">Belongs to the NAD-dependent DNA ligase family. LigA subfamily.</text>
</comment>
<proteinExistence type="inferred from homology"/>
<evidence type="ECO:0000255" key="1">
    <source>
        <dbReference type="HAMAP-Rule" id="MF_01588"/>
    </source>
</evidence>
<reference key="1">
    <citation type="journal article" date="2005" name="Infect. Immun.">
        <title>Comparative genomic analysis of Chlamydia trachomatis oculotropic and genitotropic strains.</title>
        <authorList>
            <person name="Carlson J.H."/>
            <person name="Porcella S.F."/>
            <person name="McClarty G."/>
            <person name="Caldwell H.D."/>
        </authorList>
    </citation>
    <scope>NUCLEOTIDE SEQUENCE [LARGE SCALE GENOMIC DNA]</scope>
    <source>
        <strain>ATCC VR-571B / DSM 19440 / HAR-13</strain>
    </source>
</reference>
<name>DNLJ_CHLTA</name>
<feature type="chain" id="PRO_0000313181" description="DNA ligase">
    <location>
        <begin position="1"/>
        <end position="663"/>
    </location>
</feature>
<feature type="domain" description="BRCT" evidence="1">
    <location>
        <begin position="581"/>
        <end position="663"/>
    </location>
</feature>
<feature type="active site" description="N6-AMP-lysine intermediate" evidence="1">
    <location>
        <position position="114"/>
    </location>
</feature>
<feature type="binding site" evidence="1">
    <location>
        <begin position="33"/>
        <end position="37"/>
    </location>
    <ligand>
        <name>NAD(+)</name>
        <dbReference type="ChEBI" id="CHEBI:57540"/>
    </ligand>
</feature>
<feature type="binding site" evidence="1">
    <location>
        <begin position="82"/>
        <end position="83"/>
    </location>
    <ligand>
        <name>NAD(+)</name>
        <dbReference type="ChEBI" id="CHEBI:57540"/>
    </ligand>
</feature>
<feature type="binding site" evidence="1">
    <location>
        <position position="112"/>
    </location>
    <ligand>
        <name>NAD(+)</name>
        <dbReference type="ChEBI" id="CHEBI:57540"/>
    </ligand>
</feature>
<feature type="binding site" evidence="1">
    <location>
        <position position="135"/>
    </location>
    <ligand>
        <name>NAD(+)</name>
        <dbReference type="ChEBI" id="CHEBI:57540"/>
    </ligand>
</feature>
<feature type="binding site" evidence="1">
    <location>
        <position position="171"/>
    </location>
    <ligand>
        <name>NAD(+)</name>
        <dbReference type="ChEBI" id="CHEBI:57540"/>
    </ligand>
</feature>
<feature type="binding site" evidence="1">
    <location>
        <position position="285"/>
    </location>
    <ligand>
        <name>NAD(+)</name>
        <dbReference type="ChEBI" id="CHEBI:57540"/>
    </ligand>
</feature>
<feature type="binding site" evidence="1">
    <location>
        <position position="309"/>
    </location>
    <ligand>
        <name>NAD(+)</name>
        <dbReference type="ChEBI" id="CHEBI:57540"/>
    </ligand>
</feature>
<feature type="binding site" evidence="1">
    <location>
        <position position="403"/>
    </location>
    <ligand>
        <name>Zn(2+)</name>
        <dbReference type="ChEBI" id="CHEBI:29105"/>
    </ligand>
</feature>
<feature type="binding site" evidence="1">
    <location>
        <position position="406"/>
    </location>
    <ligand>
        <name>Zn(2+)</name>
        <dbReference type="ChEBI" id="CHEBI:29105"/>
    </ligand>
</feature>
<feature type="binding site" evidence="1">
    <location>
        <position position="419"/>
    </location>
    <ligand>
        <name>Zn(2+)</name>
        <dbReference type="ChEBI" id="CHEBI:29105"/>
    </ligand>
</feature>
<feature type="binding site" evidence="1">
    <location>
        <position position="424"/>
    </location>
    <ligand>
        <name>Zn(2+)</name>
        <dbReference type="ChEBI" id="CHEBI:29105"/>
    </ligand>
</feature>
<organism>
    <name type="scientific">Chlamydia trachomatis serovar A (strain ATCC VR-571B / DSM 19440 / HAR-13)</name>
    <dbReference type="NCBI Taxonomy" id="315277"/>
    <lineage>
        <taxon>Bacteria</taxon>
        <taxon>Pseudomonadati</taxon>
        <taxon>Chlamydiota</taxon>
        <taxon>Chlamydiia</taxon>
        <taxon>Chlamydiales</taxon>
        <taxon>Chlamydiaceae</taxon>
        <taxon>Chlamydia/Chlamydophila group</taxon>
        <taxon>Chlamydia</taxon>
    </lineage>
</organism>